<proteinExistence type="inferred from homology"/>
<dbReference type="EC" id="3.4.21.88" evidence="1"/>
<dbReference type="EMBL" id="CP000946">
    <property type="protein sequence ID" value="ACA79586.1"/>
    <property type="molecule type" value="Genomic_DNA"/>
</dbReference>
<dbReference type="RefSeq" id="WP_000646078.1">
    <property type="nucleotide sequence ID" value="NZ_MTFT01000033.1"/>
</dbReference>
<dbReference type="SMR" id="B1IUK9"/>
<dbReference type="MEROPS" id="S24.001"/>
<dbReference type="GeneID" id="93777788"/>
<dbReference type="KEGG" id="ecl:EcolC_3985"/>
<dbReference type="HOGENOM" id="CLU_066192_45_3_6"/>
<dbReference type="GO" id="GO:0003677">
    <property type="term" value="F:DNA binding"/>
    <property type="evidence" value="ECO:0007669"/>
    <property type="project" value="UniProtKB-UniRule"/>
</dbReference>
<dbReference type="GO" id="GO:0004252">
    <property type="term" value="F:serine-type endopeptidase activity"/>
    <property type="evidence" value="ECO:0007669"/>
    <property type="project" value="UniProtKB-UniRule"/>
</dbReference>
<dbReference type="GO" id="GO:0006281">
    <property type="term" value="P:DNA repair"/>
    <property type="evidence" value="ECO:0007669"/>
    <property type="project" value="UniProtKB-UniRule"/>
</dbReference>
<dbReference type="GO" id="GO:0006260">
    <property type="term" value="P:DNA replication"/>
    <property type="evidence" value="ECO:0007669"/>
    <property type="project" value="UniProtKB-UniRule"/>
</dbReference>
<dbReference type="GO" id="GO:0045892">
    <property type="term" value="P:negative regulation of DNA-templated transcription"/>
    <property type="evidence" value="ECO:0007669"/>
    <property type="project" value="UniProtKB-UniRule"/>
</dbReference>
<dbReference type="GO" id="GO:0006508">
    <property type="term" value="P:proteolysis"/>
    <property type="evidence" value="ECO:0007669"/>
    <property type="project" value="InterPro"/>
</dbReference>
<dbReference type="GO" id="GO:0009432">
    <property type="term" value="P:SOS response"/>
    <property type="evidence" value="ECO:0007669"/>
    <property type="project" value="UniProtKB-UniRule"/>
</dbReference>
<dbReference type="CDD" id="cd06529">
    <property type="entry name" value="S24_LexA-like"/>
    <property type="match status" value="1"/>
</dbReference>
<dbReference type="FunFam" id="1.10.10.10:FF:000009">
    <property type="entry name" value="LexA repressor"/>
    <property type="match status" value="1"/>
</dbReference>
<dbReference type="FunFam" id="2.10.109.10:FF:000001">
    <property type="entry name" value="LexA repressor"/>
    <property type="match status" value="1"/>
</dbReference>
<dbReference type="Gene3D" id="2.10.109.10">
    <property type="entry name" value="Umud Fragment, subunit A"/>
    <property type="match status" value="1"/>
</dbReference>
<dbReference type="Gene3D" id="1.10.10.10">
    <property type="entry name" value="Winged helix-like DNA-binding domain superfamily/Winged helix DNA-binding domain"/>
    <property type="match status" value="1"/>
</dbReference>
<dbReference type="HAMAP" id="MF_00015">
    <property type="entry name" value="LexA"/>
    <property type="match status" value="1"/>
</dbReference>
<dbReference type="InterPro" id="IPR006200">
    <property type="entry name" value="LexA"/>
</dbReference>
<dbReference type="InterPro" id="IPR039418">
    <property type="entry name" value="LexA-like"/>
</dbReference>
<dbReference type="InterPro" id="IPR036286">
    <property type="entry name" value="LexA/Signal_pep-like_sf"/>
</dbReference>
<dbReference type="InterPro" id="IPR006199">
    <property type="entry name" value="LexA_DNA-bd_dom"/>
</dbReference>
<dbReference type="InterPro" id="IPR050077">
    <property type="entry name" value="LexA_repressor"/>
</dbReference>
<dbReference type="InterPro" id="IPR006197">
    <property type="entry name" value="Peptidase_S24_LexA"/>
</dbReference>
<dbReference type="InterPro" id="IPR015927">
    <property type="entry name" value="Peptidase_S24_S26A/B/C"/>
</dbReference>
<dbReference type="InterPro" id="IPR036388">
    <property type="entry name" value="WH-like_DNA-bd_sf"/>
</dbReference>
<dbReference type="InterPro" id="IPR036390">
    <property type="entry name" value="WH_DNA-bd_sf"/>
</dbReference>
<dbReference type="NCBIfam" id="TIGR00498">
    <property type="entry name" value="lexA"/>
    <property type="match status" value="1"/>
</dbReference>
<dbReference type="PANTHER" id="PTHR33516">
    <property type="entry name" value="LEXA REPRESSOR"/>
    <property type="match status" value="1"/>
</dbReference>
<dbReference type="PANTHER" id="PTHR33516:SF2">
    <property type="entry name" value="LEXA REPRESSOR-RELATED"/>
    <property type="match status" value="1"/>
</dbReference>
<dbReference type="Pfam" id="PF01726">
    <property type="entry name" value="LexA_DNA_bind"/>
    <property type="match status" value="1"/>
</dbReference>
<dbReference type="Pfam" id="PF00717">
    <property type="entry name" value="Peptidase_S24"/>
    <property type="match status" value="1"/>
</dbReference>
<dbReference type="PRINTS" id="PR00726">
    <property type="entry name" value="LEXASERPTASE"/>
</dbReference>
<dbReference type="SUPFAM" id="SSF51306">
    <property type="entry name" value="LexA/Signal peptidase"/>
    <property type="match status" value="1"/>
</dbReference>
<dbReference type="SUPFAM" id="SSF46785">
    <property type="entry name" value="Winged helix' DNA-binding domain"/>
    <property type="match status" value="1"/>
</dbReference>
<keyword id="KW-0068">Autocatalytic cleavage</keyword>
<keyword id="KW-0227">DNA damage</keyword>
<keyword id="KW-0234">DNA repair</keyword>
<keyword id="KW-0235">DNA replication</keyword>
<keyword id="KW-0238">DNA-binding</keyword>
<keyword id="KW-0378">Hydrolase</keyword>
<keyword id="KW-0678">Repressor</keyword>
<keyword id="KW-0742">SOS response</keyword>
<keyword id="KW-0804">Transcription</keyword>
<keyword id="KW-0805">Transcription regulation</keyword>
<organism>
    <name type="scientific">Escherichia coli (strain ATCC 8739 / DSM 1576 / NBRC 3972 / NCIMB 8545 / WDCM 00012 / Crooks)</name>
    <dbReference type="NCBI Taxonomy" id="481805"/>
    <lineage>
        <taxon>Bacteria</taxon>
        <taxon>Pseudomonadati</taxon>
        <taxon>Pseudomonadota</taxon>
        <taxon>Gammaproteobacteria</taxon>
        <taxon>Enterobacterales</taxon>
        <taxon>Enterobacteriaceae</taxon>
        <taxon>Escherichia</taxon>
    </lineage>
</organism>
<protein>
    <recommendedName>
        <fullName evidence="1">LexA repressor</fullName>
        <ecNumber evidence="1">3.4.21.88</ecNumber>
    </recommendedName>
</protein>
<name>LEXA_ECOLC</name>
<comment type="function">
    <text evidence="1">Represses a number of genes involved in the response to DNA damage (SOS response), including recA and lexA. Binds to the 16 bp palindromic sequence 5'-CTGTATATATATACAG-3'. In the presence of single-stranded DNA, RecA interacts with LexA causing an autocatalytic cleavage which disrupts the DNA-binding part of LexA, leading to derepression of the SOS regulon and eventually DNA repair.</text>
</comment>
<comment type="catalytic activity">
    <reaction evidence="1">
        <text>Hydrolysis of Ala-|-Gly bond in repressor LexA.</text>
        <dbReference type="EC" id="3.4.21.88"/>
    </reaction>
</comment>
<comment type="subunit">
    <text evidence="1">Homodimer.</text>
</comment>
<comment type="similarity">
    <text evidence="1">Belongs to the peptidase S24 family.</text>
</comment>
<evidence type="ECO:0000255" key="1">
    <source>
        <dbReference type="HAMAP-Rule" id="MF_00015"/>
    </source>
</evidence>
<feature type="chain" id="PRO_1000074054" description="LexA repressor">
    <location>
        <begin position="1"/>
        <end position="202"/>
    </location>
</feature>
<feature type="DNA-binding region" description="H-T-H motif" evidence="1">
    <location>
        <begin position="28"/>
        <end position="48"/>
    </location>
</feature>
<feature type="active site" description="For autocatalytic cleavage activity" evidence="1">
    <location>
        <position position="119"/>
    </location>
</feature>
<feature type="active site" description="For autocatalytic cleavage activity" evidence="1">
    <location>
        <position position="156"/>
    </location>
</feature>
<feature type="site" description="Cleavage; by autolysis" evidence="1">
    <location>
        <begin position="84"/>
        <end position="85"/>
    </location>
</feature>
<accession>B1IUK9</accession>
<gene>
    <name evidence="1" type="primary">lexA</name>
    <name type="ordered locus">EcolC_3985</name>
</gene>
<sequence>MKALTARQQEVFDLIRDHISQTGMPPTRAEIAQRLGFRSPNAAEEHLKALARKGVIEIVSGASRGIRLLQEEEEGLPLVGRVAAGEPLLAQQHIEGHYQVDPSLFKPNADFLLRVSGMSMKDIGIMDGDLLAVHKTQDVRNGQVVVARIDDEVTVKRLKKQGNKVELLPENSEFKPIVVDLRQQSFTIEGLAVGVIRNGDWL</sequence>
<reference key="1">
    <citation type="submission" date="2008-02" db="EMBL/GenBank/DDBJ databases">
        <title>Complete sequence of Escherichia coli C str. ATCC 8739.</title>
        <authorList>
            <person name="Copeland A."/>
            <person name="Lucas S."/>
            <person name="Lapidus A."/>
            <person name="Glavina del Rio T."/>
            <person name="Dalin E."/>
            <person name="Tice H."/>
            <person name="Bruce D."/>
            <person name="Goodwin L."/>
            <person name="Pitluck S."/>
            <person name="Kiss H."/>
            <person name="Brettin T."/>
            <person name="Detter J.C."/>
            <person name="Han C."/>
            <person name="Kuske C.R."/>
            <person name="Schmutz J."/>
            <person name="Larimer F."/>
            <person name="Land M."/>
            <person name="Hauser L."/>
            <person name="Kyrpides N."/>
            <person name="Mikhailova N."/>
            <person name="Ingram L."/>
            <person name="Richardson P."/>
        </authorList>
    </citation>
    <scope>NUCLEOTIDE SEQUENCE [LARGE SCALE GENOMIC DNA]</scope>
    <source>
        <strain>ATCC 8739 / DSM 1576 / NBRC 3972 / NCIMB 8545 / WDCM 00012 / Crooks</strain>
    </source>
</reference>